<organism>
    <name type="scientific">Mus musculus</name>
    <name type="common">Mouse</name>
    <dbReference type="NCBI Taxonomy" id="10090"/>
    <lineage>
        <taxon>Eukaryota</taxon>
        <taxon>Metazoa</taxon>
        <taxon>Chordata</taxon>
        <taxon>Craniata</taxon>
        <taxon>Vertebrata</taxon>
        <taxon>Euteleostomi</taxon>
        <taxon>Mammalia</taxon>
        <taxon>Eutheria</taxon>
        <taxon>Euarchontoglires</taxon>
        <taxon>Glires</taxon>
        <taxon>Rodentia</taxon>
        <taxon>Myomorpha</taxon>
        <taxon>Muroidea</taxon>
        <taxon>Muridae</taxon>
        <taxon>Murinae</taxon>
        <taxon>Mus</taxon>
        <taxon>Mus</taxon>
    </lineage>
</organism>
<gene>
    <name type="primary">Nsa2</name>
    <name type="synonym">Tinp1</name>
</gene>
<comment type="function">
    <text evidence="1">Involved in the biogenesis of the 60S ribosomal subunit. May play a part in the quality control of pre-60S particles (By similarity).</text>
</comment>
<comment type="subunit">
    <text evidence="1">Component of the pre-66S ribosomal particle.</text>
</comment>
<comment type="subcellular location">
    <subcellularLocation>
        <location evidence="1">Nucleus</location>
        <location evidence="1">Nucleolus</location>
    </subcellularLocation>
</comment>
<comment type="similarity">
    <text evidence="5">Belongs to the eukaryotic ribosomal protein eS8 family. Ribosome biogenesis protein NSA2 subfamily.</text>
</comment>
<comment type="sequence caution" evidence="5">
    <conflict type="frameshift">
        <sequence resource="EMBL-CDS" id="AAF63492"/>
    </conflict>
</comment>
<sequence>MPQNEYIELHRKRYGYRLDYHEKKRKKEGREAHERSKKAKKMIGLKAKLYHKQRHAEKIQMKKTIKMHEKRNTKQKDDEKTPQGAVPAYLLDREGQSRAKVLSNMIKQKRKEKAGKWEVPLPKVRAQGETEVLKVIRTGKRKKKAWKRMVTKVCFVGDGFTRKPPKYERFIRPMGLRFKKAHVTHPELKATFCLPILGVKKNPSSPLYTTLGVITKGTVIEVNVSELGLVTQGGKVIWGKYAQVTNNPENDGCINAVLLV</sequence>
<name>NSA2_MOUSE</name>
<proteinExistence type="evidence at transcript level"/>
<dbReference type="EMBL" id="AK002474">
    <property type="protein sequence ID" value="BAB22128.2"/>
    <property type="molecule type" value="mRNA"/>
</dbReference>
<dbReference type="EMBL" id="AK012832">
    <property type="protein sequence ID" value="BAB28500.1"/>
    <property type="molecule type" value="mRNA"/>
</dbReference>
<dbReference type="EMBL" id="AK014275">
    <property type="protein sequence ID" value="BAB29237.1"/>
    <property type="molecule type" value="mRNA"/>
</dbReference>
<dbReference type="EMBL" id="AK017605">
    <property type="protein sequence ID" value="BAB30834.1"/>
    <property type="molecule type" value="mRNA"/>
</dbReference>
<dbReference type="EMBL" id="AK019203">
    <property type="protein sequence ID" value="BAB31599.3"/>
    <property type="molecule type" value="mRNA"/>
</dbReference>
<dbReference type="EMBL" id="AK019279">
    <property type="protein sequence ID" value="BAC25587.1"/>
    <property type="molecule type" value="mRNA"/>
</dbReference>
<dbReference type="EMBL" id="AK019379">
    <property type="protein sequence ID" value="BAB31689.1"/>
    <property type="molecule type" value="mRNA"/>
</dbReference>
<dbReference type="EMBL" id="AK078457">
    <property type="protein sequence ID" value="BAC37283.1"/>
    <property type="molecule type" value="mRNA"/>
</dbReference>
<dbReference type="EMBL" id="AF238866">
    <property type="protein sequence ID" value="AAF63492.1"/>
    <property type="status" value="ALT_FRAME"/>
    <property type="molecule type" value="mRNA"/>
</dbReference>
<dbReference type="EMBL" id="BC126976">
    <property type="protein sequence ID" value="AAI26977.1"/>
    <property type="molecule type" value="mRNA"/>
</dbReference>
<dbReference type="CCDS" id="CCDS36756.1"/>
<dbReference type="RefSeq" id="NP_067527.3">
    <property type="nucleotide sequence ID" value="NM_021552.5"/>
</dbReference>
<dbReference type="SMR" id="Q9CR47"/>
<dbReference type="BioGRID" id="208514">
    <property type="interactions" value="4"/>
</dbReference>
<dbReference type="FunCoup" id="Q9CR47">
    <property type="interactions" value="974"/>
</dbReference>
<dbReference type="IntAct" id="Q9CR47">
    <property type="interactions" value="1"/>
</dbReference>
<dbReference type="STRING" id="10090.ENSMUSP00000073161"/>
<dbReference type="PhosphoSitePlus" id="Q9CR47"/>
<dbReference type="jPOST" id="Q9CR47"/>
<dbReference type="PaxDb" id="10090-ENSMUSP00000073161"/>
<dbReference type="PeptideAtlas" id="Q9CR47"/>
<dbReference type="ProteomicsDB" id="295526"/>
<dbReference type="Pumba" id="Q9CR47"/>
<dbReference type="Antibodypedia" id="12347">
    <property type="antibodies" value="81 antibodies from 28 providers"/>
</dbReference>
<dbReference type="DNASU" id="59050"/>
<dbReference type="Ensembl" id="ENSMUST00000073456.9">
    <property type="protein sequence ID" value="ENSMUSP00000073161.8"/>
    <property type="gene ID" value="ENSMUSG00000060739.9"/>
</dbReference>
<dbReference type="GeneID" id="59050"/>
<dbReference type="KEGG" id="mmu:59050"/>
<dbReference type="UCSC" id="uc007rns.2">
    <property type="organism name" value="mouse"/>
</dbReference>
<dbReference type="AGR" id="MGI:1913883"/>
<dbReference type="CTD" id="10412"/>
<dbReference type="MGI" id="MGI:1913883">
    <property type="gene designation" value="Nsa2"/>
</dbReference>
<dbReference type="VEuPathDB" id="HostDB:ENSMUSG00000060739"/>
<dbReference type="eggNOG" id="KOG3163">
    <property type="taxonomic scope" value="Eukaryota"/>
</dbReference>
<dbReference type="GeneTree" id="ENSGT00390000018706"/>
<dbReference type="HOGENOM" id="CLU_1070048_0_0_1"/>
<dbReference type="InParanoid" id="Q9CR47"/>
<dbReference type="OMA" id="TNTPEND"/>
<dbReference type="OrthoDB" id="1847590at2759"/>
<dbReference type="PhylomeDB" id="Q9CR47"/>
<dbReference type="TreeFam" id="TF300766"/>
<dbReference type="BioGRID-ORCS" id="59050">
    <property type="hits" value="24 hits in 57 CRISPR screens"/>
</dbReference>
<dbReference type="ChiTaRS" id="Nsa2">
    <property type="organism name" value="mouse"/>
</dbReference>
<dbReference type="PRO" id="PR:Q9CR47"/>
<dbReference type="Proteomes" id="UP000000589">
    <property type="component" value="Chromosome 13"/>
</dbReference>
<dbReference type="RNAct" id="Q9CR47">
    <property type="molecule type" value="protein"/>
</dbReference>
<dbReference type="Bgee" id="ENSMUSG00000060739">
    <property type="expression patterns" value="Expressed in undifferentiated genital tubercle and 84 other cell types or tissues"/>
</dbReference>
<dbReference type="ExpressionAtlas" id="Q9CR47">
    <property type="expression patterns" value="baseline and differential"/>
</dbReference>
<dbReference type="GO" id="GO:0005730">
    <property type="term" value="C:nucleolus"/>
    <property type="evidence" value="ECO:0007669"/>
    <property type="project" value="UniProtKB-SubCell"/>
</dbReference>
<dbReference type="GO" id="GO:1990904">
    <property type="term" value="C:ribonucleoprotein complex"/>
    <property type="evidence" value="ECO:0007669"/>
    <property type="project" value="UniProtKB-KW"/>
</dbReference>
<dbReference type="GO" id="GO:0006364">
    <property type="term" value="P:rRNA processing"/>
    <property type="evidence" value="ECO:0007669"/>
    <property type="project" value="UniProtKB-KW"/>
</dbReference>
<dbReference type="CDD" id="cd11381">
    <property type="entry name" value="NSA2"/>
    <property type="match status" value="1"/>
</dbReference>
<dbReference type="FunFam" id="2.40.10.310:FF:000001">
    <property type="entry name" value="NSA2, ribosome biogenesis homolog"/>
    <property type="match status" value="1"/>
</dbReference>
<dbReference type="Gene3D" id="2.40.10.310">
    <property type="match status" value="1"/>
</dbReference>
<dbReference type="InterPro" id="IPR039411">
    <property type="entry name" value="NSA2_fam"/>
</dbReference>
<dbReference type="InterPro" id="IPR022309">
    <property type="entry name" value="Ribosomal_Se8/biogenesis_NSA2"/>
</dbReference>
<dbReference type="PANTHER" id="PTHR12642">
    <property type="entry name" value="RIBOSOME BIOGENESIS PROTEIN NSA2 HOMOLOG"/>
    <property type="match status" value="1"/>
</dbReference>
<dbReference type="Pfam" id="PF01201">
    <property type="entry name" value="Ribosomal_S8e"/>
    <property type="match status" value="1"/>
</dbReference>
<accession>Q9CR47</accession>
<accession>A0JNU8</accession>
<accession>Q8BHQ6</accession>
<accession>Q8BHT0</accession>
<accession>Q9CRQ0</accession>
<accession>Q9CS34</accession>
<accession>Q9CYK0</accession>
<accession>Q9JKF9</accession>
<protein>
    <recommendedName>
        <fullName>Ribosome biogenesis protein NSA2 homolog</fullName>
    </recommendedName>
    <alternativeName>
        <fullName>L-name-related protein 42</fullName>
        <shortName>LNR42</shortName>
    </alternativeName>
    <alternativeName>
        <fullName>TGF-beta-inducible nuclear protein 1</fullName>
    </alternativeName>
</protein>
<reference key="1">
    <citation type="journal article" date="2005" name="Science">
        <title>The transcriptional landscape of the mammalian genome.</title>
        <authorList>
            <person name="Carninci P."/>
            <person name="Kasukawa T."/>
            <person name="Katayama S."/>
            <person name="Gough J."/>
            <person name="Frith M.C."/>
            <person name="Maeda N."/>
            <person name="Oyama R."/>
            <person name="Ravasi T."/>
            <person name="Lenhard B."/>
            <person name="Wells C."/>
            <person name="Kodzius R."/>
            <person name="Shimokawa K."/>
            <person name="Bajic V.B."/>
            <person name="Brenner S.E."/>
            <person name="Batalov S."/>
            <person name="Forrest A.R."/>
            <person name="Zavolan M."/>
            <person name="Davis M.J."/>
            <person name="Wilming L.G."/>
            <person name="Aidinis V."/>
            <person name="Allen J.E."/>
            <person name="Ambesi-Impiombato A."/>
            <person name="Apweiler R."/>
            <person name="Aturaliya R.N."/>
            <person name="Bailey T.L."/>
            <person name="Bansal M."/>
            <person name="Baxter L."/>
            <person name="Beisel K.W."/>
            <person name="Bersano T."/>
            <person name="Bono H."/>
            <person name="Chalk A.M."/>
            <person name="Chiu K.P."/>
            <person name="Choudhary V."/>
            <person name="Christoffels A."/>
            <person name="Clutterbuck D.R."/>
            <person name="Crowe M.L."/>
            <person name="Dalla E."/>
            <person name="Dalrymple B.P."/>
            <person name="de Bono B."/>
            <person name="Della Gatta G."/>
            <person name="di Bernardo D."/>
            <person name="Down T."/>
            <person name="Engstrom P."/>
            <person name="Fagiolini M."/>
            <person name="Faulkner G."/>
            <person name="Fletcher C.F."/>
            <person name="Fukushima T."/>
            <person name="Furuno M."/>
            <person name="Futaki S."/>
            <person name="Gariboldi M."/>
            <person name="Georgii-Hemming P."/>
            <person name="Gingeras T.R."/>
            <person name="Gojobori T."/>
            <person name="Green R.E."/>
            <person name="Gustincich S."/>
            <person name="Harbers M."/>
            <person name="Hayashi Y."/>
            <person name="Hensch T.K."/>
            <person name="Hirokawa N."/>
            <person name="Hill D."/>
            <person name="Huminiecki L."/>
            <person name="Iacono M."/>
            <person name="Ikeo K."/>
            <person name="Iwama A."/>
            <person name="Ishikawa T."/>
            <person name="Jakt M."/>
            <person name="Kanapin A."/>
            <person name="Katoh M."/>
            <person name="Kawasawa Y."/>
            <person name="Kelso J."/>
            <person name="Kitamura H."/>
            <person name="Kitano H."/>
            <person name="Kollias G."/>
            <person name="Krishnan S.P."/>
            <person name="Kruger A."/>
            <person name="Kummerfeld S.K."/>
            <person name="Kurochkin I.V."/>
            <person name="Lareau L.F."/>
            <person name="Lazarevic D."/>
            <person name="Lipovich L."/>
            <person name="Liu J."/>
            <person name="Liuni S."/>
            <person name="McWilliam S."/>
            <person name="Madan Babu M."/>
            <person name="Madera M."/>
            <person name="Marchionni L."/>
            <person name="Matsuda H."/>
            <person name="Matsuzawa S."/>
            <person name="Miki H."/>
            <person name="Mignone F."/>
            <person name="Miyake S."/>
            <person name="Morris K."/>
            <person name="Mottagui-Tabar S."/>
            <person name="Mulder N."/>
            <person name="Nakano N."/>
            <person name="Nakauchi H."/>
            <person name="Ng P."/>
            <person name="Nilsson R."/>
            <person name="Nishiguchi S."/>
            <person name="Nishikawa S."/>
            <person name="Nori F."/>
            <person name="Ohara O."/>
            <person name="Okazaki Y."/>
            <person name="Orlando V."/>
            <person name="Pang K.C."/>
            <person name="Pavan W.J."/>
            <person name="Pavesi G."/>
            <person name="Pesole G."/>
            <person name="Petrovsky N."/>
            <person name="Piazza S."/>
            <person name="Reed J."/>
            <person name="Reid J.F."/>
            <person name="Ring B.Z."/>
            <person name="Ringwald M."/>
            <person name="Rost B."/>
            <person name="Ruan Y."/>
            <person name="Salzberg S.L."/>
            <person name="Sandelin A."/>
            <person name="Schneider C."/>
            <person name="Schoenbach C."/>
            <person name="Sekiguchi K."/>
            <person name="Semple C.A."/>
            <person name="Seno S."/>
            <person name="Sessa L."/>
            <person name="Sheng Y."/>
            <person name="Shibata Y."/>
            <person name="Shimada H."/>
            <person name="Shimada K."/>
            <person name="Silva D."/>
            <person name="Sinclair B."/>
            <person name="Sperling S."/>
            <person name="Stupka E."/>
            <person name="Sugiura K."/>
            <person name="Sultana R."/>
            <person name="Takenaka Y."/>
            <person name="Taki K."/>
            <person name="Tammoja K."/>
            <person name="Tan S.L."/>
            <person name="Tang S."/>
            <person name="Taylor M.S."/>
            <person name="Tegner J."/>
            <person name="Teichmann S.A."/>
            <person name="Ueda H.R."/>
            <person name="van Nimwegen E."/>
            <person name="Verardo R."/>
            <person name="Wei C.L."/>
            <person name="Yagi K."/>
            <person name="Yamanishi H."/>
            <person name="Zabarovsky E."/>
            <person name="Zhu S."/>
            <person name="Zimmer A."/>
            <person name="Hide W."/>
            <person name="Bult C."/>
            <person name="Grimmond S.M."/>
            <person name="Teasdale R.D."/>
            <person name="Liu E.T."/>
            <person name="Brusic V."/>
            <person name="Quackenbush J."/>
            <person name="Wahlestedt C."/>
            <person name="Mattick J.S."/>
            <person name="Hume D.A."/>
            <person name="Kai C."/>
            <person name="Sasaki D."/>
            <person name="Tomaru Y."/>
            <person name="Fukuda S."/>
            <person name="Kanamori-Katayama M."/>
            <person name="Suzuki M."/>
            <person name="Aoki J."/>
            <person name="Arakawa T."/>
            <person name="Iida J."/>
            <person name="Imamura K."/>
            <person name="Itoh M."/>
            <person name="Kato T."/>
            <person name="Kawaji H."/>
            <person name="Kawagashira N."/>
            <person name="Kawashima T."/>
            <person name="Kojima M."/>
            <person name="Kondo S."/>
            <person name="Konno H."/>
            <person name="Nakano K."/>
            <person name="Ninomiya N."/>
            <person name="Nishio T."/>
            <person name="Okada M."/>
            <person name="Plessy C."/>
            <person name="Shibata K."/>
            <person name="Shiraki T."/>
            <person name="Suzuki S."/>
            <person name="Tagami M."/>
            <person name="Waki K."/>
            <person name="Watahiki A."/>
            <person name="Okamura-Oho Y."/>
            <person name="Suzuki H."/>
            <person name="Kawai J."/>
            <person name="Hayashizaki Y."/>
        </authorList>
    </citation>
    <scope>NUCLEOTIDE SEQUENCE [LARGE SCALE MRNA]</scope>
    <source>
        <strain>C57BL/6J</strain>
        <tissue>Embryo</tissue>
        <tissue>Embryonic head</tissue>
        <tissue>Kidney</tissue>
        <tissue>Wolffian duct</tissue>
    </source>
</reference>
<reference key="2">
    <citation type="submission" date="2000-02" db="EMBL/GenBank/DDBJ databases">
        <authorList>
            <person name="Guo H."/>
            <person name="Cai Q."/>
            <person name="Schroeder R."/>
            <person name="Kuo P."/>
        </authorList>
    </citation>
    <scope>NUCLEOTIDE SEQUENCE [MRNA]</scope>
    <source>
        <tissue>Macrophage</tissue>
    </source>
</reference>
<reference key="3">
    <citation type="journal article" date="2004" name="Genome Res.">
        <title>The status, quality, and expansion of the NIH full-length cDNA project: the Mammalian Gene Collection (MGC).</title>
        <authorList>
            <consortium name="The MGC Project Team"/>
        </authorList>
    </citation>
    <scope>NUCLEOTIDE SEQUENCE [LARGE SCALE MRNA]</scope>
</reference>
<keyword id="KW-1017">Isopeptide bond</keyword>
<keyword id="KW-0539">Nucleus</keyword>
<keyword id="KW-0597">Phosphoprotein</keyword>
<keyword id="KW-1185">Reference proteome</keyword>
<keyword id="KW-0687">Ribonucleoprotein</keyword>
<keyword id="KW-0690">Ribosome biogenesis</keyword>
<keyword id="KW-0698">rRNA processing</keyword>
<keyword id="KW-0832">Ubl conjugation</keyword>
<feature type="chain" id="PRO_0000122260" description="Ribosome biogenesis protein NSA2 homolog">
    <location>
        <begin position="1"/>
        <end position="260"/>
    </location>
</feature>
<feature type="region of interest" description="Disordered" evidence="4">
    <location>
        <begin position="20"/>
        <end position="42"/>
    </location>
</feature>
<feature type="short sequence motif" description="Nuclear localization signal" evidence="3">
    <location>
        <begin position="11"/>
        <end position="18"/>
    </location>
</feature>
<feature type="compositionally biased region" description="Basic and acidic residues" evidence="4">
    <location>
        <begin position="20"/>
        <end position="34"/>
    </location>
</feature>
<feature type="modified residue" description="Phosphothreonine" evidence="2">
    <location>
        <position position="81"/>
    </location>
</feature>
<feature type="cross-link" description="Glycyl lysine isopeptide (Lys-Gly) (interchain with G-Cter in SUMO2)" evidence="2">
    <location>
        <position position="80"/>
    </location>
</feature>
<feature type="sequence conflict" description="In Ref. 1; BAB22128." evidence="5" ref="1">
    <original>MPQNEYIELHRKRYGYRLDYHEKKRKKEGREAHERSKKAKKMIG</original>
    <variation>MHVQRRQKNDC</variation>
    <location>
        <begin position="1"/>
        <end position="44"/>
    </location>
</feature>
<feature type="sequence conflict" description="In Ref. 1; BAC25587." evidence="5" ref="1">
    <original>E</original>
    <variation>G</variation>
    <location>
        <position position="22"/>
    </location>
</feature>
<feature type="sequence conflict" description="In Ref. 1; BAB30834." evidence="5" ref="1">
    <original>G</original>
    <variation>E</variation>
    <location>
        <position position="233"/>
    </location>
</feature>
<feature type="sequence conflict" description="In Ref. 1; BAB30834." evidence="5" ref="1">
    <original>W</original>
    <variation>C</variation>
    <location>
        <position position="238"/>
    </location>
</feature>
<evidence type="ECO:0000250" key="1"/>
<evidence type="ECO:0000250" key="2">
    <source>
        <dbReference type="UniProtKB" id="O95478"/>
    </source>
</evidence>
<evidence type="ECO:0000255" key="3">
    <source>
        <dbReference type="PROSITE-ProRule" id="PRU00768"/>
    </source>
</evidence>
<evidence type="ECO:0000256" key="4">
    <source>
        <dbReference type="SAM" id="MobiDB-lite"/>
    </source>
</evidence>
<evidence type="ECO:0000305" key="5"/>